<protein>
    <recommendedName>
        <fullName>Putative sgc region protein SgcQ</fullName>
    </recommendedName>
</protein>
<keyword id="KW-1185">Reference proteome</keyword>
<gene>
    <name type="primary">sgcQ</name>
    <name type="synonym">yjhM</name>
    <name type="ordered locus">b4303</name>
    <name type="ordered locus">JW4265</name>
</gene>
<proteinExistence type="inferred from homology"/>
<evidence type="ECO:0000305" key="1"/>
<name>SGCQ_ECOLI</name>
<accession>P39364</accession>
<accession>Q2M612</accession>
<dbReference type="EMBL" id="U14003">
    <property type="protein sequence ID" value="AAA97199.1"/>
    <property type="molecule type" value="Genomic_DNA"/>
</dbReference>
<dbReference type="EMBL" id="U00096">
    <property type="protein sequence ID" value="AAC77259.1"/>
    <property type="molecule type" value="Genomic_DNA"/>
</dbReference>
<dbReference type="EMBL" id="AP009048">
    <property type="protein sequence ID" value="BAE78294.1"/>
    <property type="molecule type" value="Genomic_DNA"/>
</dbReference>
<dbReference type="PIR" id="S56528">
    <property type="entry name" value="S56528"/>
</dbReference>
<dbReference type="RefSeq" id="NP_418723.1">
    <property type="nucleotide sequence ID" value="NC_000913.3"/>
</dbReference>
<dbReference type="RefSeq" id="WP_000118626.1">
    <property type="nucleotide sequence ID" value="NZ_SSUV01000012.1"/>
</dbReference>
<dbReference type="BioGRID" id="4261496">
    <property type="interactions" value="12"/>
</dbReference>
<dbReference type="FunCoup" id="P39364">
    <property type="interactions" value="34"/>
</dbReference>
<dbReference type="IntAct" id="P39364">
    <property type="interactions" value="1"/>
</dbReference>
<dbReference type="STRING" id="511145.b4303"/>
<dbReference type="jPOST" id="P39364"/>
<dbReference type="PaxDb" id="511145-b4303"/>
<dbReference type="EnsemblBacteria" id="AAC77259">
    <property type="protein sequence ID" value="AAC77259"/>
    <property type="gene ID" value="b4303"/>
</dbReference>
<dbReference type="GeneID" id="948834"/>
<dbReference type="KEGG" id="ecj:JW4265"/>
<dbReference type="KEGG" id="eco:b4303"/>
<dbReference type="KEGG" id="ecoc:C3026_23215"/>
<dbReference type="PATRIC" id="fig|1411691.4.peg.2394"/>
<dbReference type="EchoBASE" id="EB2443"/>
<dbReference type="eggNOG" id="COG0434">
    <property type="taxonomic scope" value="Bacteria"/>
</dbReference>
<dbReference type="HOGENOM" id="CLU_075239_0_0_6"/>
<dbReference type="InParanoid" id="P39364"/>
<dbReference type="OMA" id="ENFFDAP"/>
<dbReference type="OrthoDB" id="9791357at2"/>
<dbReference type="PhylomeDB" id="P39364"/>
<dbReference type="BioCyc" id="EcoCyc:G7915-MONOMER"/>
<dbReference type="PRO" id="PR:P39364"/>
<dbReference type="Proteomes" id="UP000000625">
    <property type="component" value="Chromosome"/>
</dbReference>
<dbReference type="InterPro" id="IPR005137">
    <property type="entry name" value="BtpA"/>
</dbReference>
<dbReference type="InterPro" id="IPR011060">
    <property type="entry name" value="RibuloseP-bd_barrel"/>
</dbReference>
<dbReference type="NCBIfam" id="TIGR00259">
    <property type="entry name" value="thylakoid_BtpA"/>
    <property type="match status" value="1"/>
</dbReference>
<dbReference type="PANTHER" id="PTHR21381:SF3">
    <property type="entry name" value="SGC REGION PROTEIN SGCQ-RELATED"/>
    <property type="match status" value="1"/>
</dbReference>
<dbReference type="PANTHER" id="PTHR21381">
    <property type="entry name" value="ZGC:162297"/>
    <property type="match status" value="1"/>
</dbReference>
<dbReference type="Pfam" id="PF03437">
    <property type="entry name" value="BtpA"/>
    <property type="match status" value="1"/>
</dbReference>
<dbReference type="PIRSF" id="PIRSF005956">
    <property type="entry name" value="BtpA"/>
    <property type="match status" value="1"/>
</dbReference>
<dbReference type="SUPFAM" id="SSF51366">
    <property type="entry name" value="Ribulose-phoshate binding barrel"/>
    <property type="match status" value="1"/>
</dbReference>
<reference key="1">
    <citation type="journal article" date="1995" name="Nucleic Acids Res.">
        <title>Analysis of the Escherichia coli genome VI: DNA sequence of the region from 92.8 through 100 minutes.</title>
        <authorList>
            <person name="Burland V.D."/>
            <person name="Plunkett G. III"/>
            <person name="Sofia H.J."/>
            <person name="Daniels D.L."/>
            <person name="Blattner F.R."/>
        </authorList>
    </citation>
    <scope>NUCLEOTIDE SEQUENCE [LARGE SCALE GENOMIC DNA]</scope>
    <source>
        <strain>K12 / MG1655 / ATCC 47076</strain>
    </source>
</reference>
<reference key="2">
    <citation type="journal article" date="1997" name="Science">
        <title>The complete genome sequence of Escherichia coli K-12.</title>
        <authorList>
            <person name="Blattner F.R."/>
            <person name="Plunkett G. III"/>
            <person name="Bloch C.A."/>
            <person name="Perna N.T."/>
            <person name="Burland V."/>
            <person name="Riley M."/>
            <person name="Collado-Vides J."/>
            <person name="Glasner J.D."/>
            <person name="Rode C.K."/>
            <person name="Mayhew G.F."/>
            <person name="Gregor J."/>
            <person name="Davis N.W."/>
            <person name="Kirkpatrick H.A."/>
            <person name="Goeden M.A."/>
            <person name="Rose D.J."/>
            <person name="Mau B."/>
            <person name="Shao Y."/>
        </authorList>
    </citation>
    <scope>NUCLEOTIDE SEQUENCE [LARGE SCALE GENOMIC DNA]</scope>
    <source>
        <strain>K12 / MG1655 / ATCC 47076</strain>
    </source>
</reference>
<reference key="3">
    <citation type="journal article" date="2006" name="Mol. Syst. Biol.">
        <title>Highly accurate genome sequences of Escherichia coli K-12 strains MG1655 and W3110.</title>
        <authorList>
            <person name="Hayashi K."/>
            <person name="Morooka N."/>
            <person name="Yamamoto Y."/>
            <person name="Fujita K."/>
            <person name="Isono K."/>
            <person name="Choi S."/>
            <person name="Ohtsubo E."/>
            <person name="Baba T."/>
            <person name="Wanner B.L."/>
            <person name="Mori H."/>
            <person name="Horiuchi T."/>
        </authorList>
    </citation>
    <scope>NUCLEOTIDE SEQUENCE [LARGE SCALE GENOMIC DNA]</scope>
    <source>
        <strain>K12 / W3110 / ATCC 27325 / DSM 5911</strain>
    </source>
</reference>
<reference key="4">
    <citation type="journal article" date="1996" name="Genome Sci. Technol.">
        <title>Novel phosphotransferases system genes revealed by bacterial genome analysis: operons encoding homologues of sugar-specific permease domains of the phosphotransferase system and pentose catabolic enzymes.</title>
        <authorList>
            <person name="Reizer J."/>
            <person name="Charbit A."/>
            <person name="Reizer A."/>
            <person name="Saier M.H. Jr."/>
        </authorList>
    </citation>
    <scope>DISCUSSION OF SEQUENCE</scope>
</reference>
<comment type="similarity">
    <text evidence="1">Belongs to the BtpA family.</text>
</comment>
<organism>
    <name type="scientific">Escherichia coli (strain K12)</name>
    <dbReference type="NCBI Taxonomy" id="83333"/>
    <lineage>
        <taxon>Bacteria</taxon>
        <taxon>Pseudomonadati</taxon>
        <taxon>Pseudomonadota</taxon>
        <taxon>Gammaproteobacteria</taxon>
        <taxon>Enterobacterales</taxon>
        <taxon>Enterobacteriaceae</taxon>
        <taxon>Escherichia</taxon>
    </lineage>
</organism>
<sequence>MSWLKEVIGTEKAVIAMCHLRALPGDPSFDAQLGMNWVIDKAWDDLMALQNGGVDAVMFSNEFSLPYLTKVRPETTAAMARIIGQLMSDIRIPFGVNVLWDPVASFDLAMATGAKFIREIFTGAYASDFGVWDTNVGETIRHQHRIGAGEVKTLFNIVPEAAVYLGNRDICSIAKSTVFNNHPDALCVSGLTAGTRTDSALLKRVKETVPDTVVLANTGVCLENVEEQLSIADGCVTATTFKKDGVFANFVDQARVSQFMEKVHHIRR</sequence>
<feature type="chain" id="PRO_0000159329" description="Putative sgc region protein SgcQ">
    <location>
        <begin position="1"/>
        <end position="268"/>
    </location>
</feature>